<gene>
    <name evidence="1" type="primary">aspS</name>
    <name type="ordered locus">WS1781</name>
</gene>
<evidence type="ECO:0000255" key="1">
    <source>
        <dbReference type="HAMAP-Rule" id="MF_00044"/>
    </source>
</evidence>
<comment type="function">
    <text evidence="1">Aspartyl-tRNA synthetase with relaxed tRNA specificity since it is able to aspartylate not only its cognate tRNA(Asp) but also tRNA(Asn). Reaction proceeds in two steps: L-aspartate is first activated by ATP to form Asp-AMP and then transferred to the acceptor end of tRNA(Asp/Asn).</text>
</comment>
<comment type="catalytic activity">
    <reaction evidence="1">
        <text>tRNA(Asx) + L-aspartate + ATP = L-aspartyl-tRNA(Asx) + AMP + diphosphate</text>
        <dbReference type="Rhea" id="RHEA:18349"/>
        <dbReference type="Rhea" id="RHEA-COMP:9710"/>
        <dbReference type="Rhea" id="RHEA-COMP:9711"/>
        <dbReference type="ChEBI" id="CHEBI:29991"/>
        <dbReference type="ChEBI" id="CHEBI:30616"/>
        <dbReference type="ChEBI" id="CHEBI:33019"/>
        <dbReference type="ChEBI" id="CHEBI:78442"/>
        <dbReference type="ChEBI" id="CHEBI:78516"/>
        <dbReference type="ChEBI" id="CHEBI:456215"/>
        <dbReference type="EC" id="6.1.1.23"/>
    </reaction>
</comment>
<comment type="subunit">
    <text evidence="1">Homodimer.</text>
</comment>
<comment type="subcellular location">
    <subcellularLocation>
        <location evidence="1">Cytoplasm</location>
    </subcellularLocation>
</comment>
<comment type="similarity">
    <text evidence="1">Belongs to the class-II aminoacyl-tRNA synthetase family. Type 1 subfamily.</text>
</comment>
<proteinExistence type="inferred from homology"/>
<dbReference type="EC" id="6.1.1.23" evidence="1"/>
<dbReference type="EMBL" id="BX571661">
    <property type="protein sequence ID" value="CAE10803.1"/>
    <property type="molecule type" value="Genomic_DNA"/>
</dbReference>
<dbReference type="SMR" id="Q7M8A6"/>
<dbReference type="STRING" id="273121.WS1781"/>
<dbReference type="KEGG" id="wsu:WS1781"/>
<dbReference type="eggNOG" id="COG0173">
    <property type="taxonomic scope" value="Bacteria"/>
</dbReference>
<dbReference type="HOGENOM" id="CLU_014330_3_2_7"/>
<dbReference type="Proteomes" id="UP000000422">
    <property type="component" value="Chromosome"/>
</dbReference>
<dbReference type="GO" id="GO:0005737">
    <property type="term" value="C:cytoplasm"/>
    <property type="evidence" value="ECO:0007669"/>
    <property type="project" value="UniProtKB-SubCell"/>
</dbReference>
<dbReference type="GO" id="GO:0004815">
    <property type="term" value="F:aspartate-tRNA ligase activity"/>
    <property type="evidence" value="ECO:0007669"/>
    <property type="project" value="UniProtKB-UniRule"/>
</dbReference>
<dbReference type="GO" id="GO:0050560">
    <property type="term" value="F:aspartate-tRNA(Asn) ligase activity"/>
    <property type="evidence" value="ECO:0007669"/>
    <property type="project" value="UniProtKB-EC"/>
</dbReference>
<dbReference type="GO" id="GO:0005524">
    <property type="term" value="F:ATP binding"/>
    <property type="evidence" value="ECO:0007669"/>
    <property type="project" value="UniProtKB-UniRule"/>
</dbReference>
<dbReference type="GO" id="GO:0003676">
    <property type="term" value="F:nucleic acid binding"/>
    <property type="evidence" value="ECO:0007669"/>
    <property type="project" value="InterPro"/>
</dbReference>
<dbReference type="GO" id="GO:0006422">
    <property type="term" value="P:aspartyl-tRNA aminoacylation"/>
    <property type="evidence" value="ECO:0007669"/>
    <property type="project" value="UniProtKB-UniRule"/>
</dbReference>
<dbReference type="CDD" id="cd00777">
    <property type="entry name" value="AspRS_core"/>
    <property type="match status" value="1"/>
</dbReference>
<dbReference type="CDD" id="cd04317">
    <property type="entry name" value="EcAspRS_like_N"/>
    <property type="match status" value="1"/>
</dbReference>
<dbReference type="Gene3D" id="3.30.930.10">
    <property type="entry name" value="Bira Bifunctional Protein, Domain 2"/>
    <property type="match status" value="1"/>
</dbReference>
<dbReference type="Gene3D" id="3.30.1360.30">
    <property type="entry name" value="GAD-like domain"/>
    <property type="match status" value="1"/>
</dbReference>
<dbReference type="Gene3D" id="2.40.50.140">
    <property type="entry name" value="Nucleic acid-binding proteins"/>
    <property type="match status" value="1"/>
</dbReference>
<dbReference type="HAMAP" id="MF_00044">
    <property type="entry name" value="Asp_tRNA_synth_type1"/>
    <property type="match status" value="1"/>
</dbReference>
<dbReference type="InterPro" id="IPR004364">
    <property type="entry name" value="Aa-tRNA-synt_II"/>
</dbReference>
<dbReference type="InterPro" id="IPR006195">
    <property type="entry name" value="aa-tRNA-synth_II"/>
</dbReference>
<dbReference type="InterPro" id="IPR045864">
    <property type="entry name" value="aa-tRNA-synth_II/BPL/LPL"/>
</dbReference>
<dbReference type="InterPro" id="IPR004524">
    <property type="entry name" value="Asp-tRNA-ligase_1"/>
</dbReference>
<dbReference type="InterPro" id="IPR047089">
    <property type="entry name" value="Asp-tRNA-ligase_1_N"/>
</dbReference>
<dbReference type="InterPro" id="IPR002312">
    <property type="entry name" value="Asp/Asn-tRNA-synth_IIb"/>
</dbReference>
<dbReference type="InterPro" id="IPR047090">
    <property type="entry name" value="AspRS_core"/>
</dbReference>
<dbReference type="InterPro" id="IPR004115">
    <property type="entry name" value="GAD-like_sf"/>
</dbReference>
<dbReference type="InterPro" id="IPR029351">
    <property type="entry name" value="GAD_dom"/>
</dbReference>
<dbReference type="InterPro" id="IPR012340">
    <property type="entry name" value="NA-bd_OB-fold"/>
</dbReference>
<dbReference type="InterPro" id="IPR004365">
    <property type="entry name" value="NA-bd_OB_tRNA"/>
</dbReference>
<dbReference type="NCBIfam" id="TIGR00459">
    <property type="entry name" value="aspS_bact"/>
    <property type="match status" value="1"/>
</dbReference>
<dbReference type="NCBIfam" id="NF001750">
    <property type="entry name" value="PRK00476.1"/>
    <property type="match status" value="1"/>
</dbReference>
<dbReference type="PANTHER" id="PTHR22594:SF5">
    <property type="entry name" value="ASPARTATE--TRNA LIGASE, MITOCHONDRIAL"/>
    <property type="match status" value="1"/>
</dbReference>
<dbReference type="PANTHER" id="PTHR22594">
    <property type="entry name" value="ASPARTYL/LYSYL-TRNA SYNTHETASE"/>
    <property type="match status" value="1"/>
</dbReference>
<dbReference type="Pfam" id="PF02938">
    <property type="entry name" value="GAD"/>
    <property type="match status" value="1"/>
</dbReference>
<dbReference type="Pfam" id="PF00152">
    <property type="entry name" value="tRNA-synt_2"/>
    <property type="match status" value="1"/>
</dbReference>
<dbReference type="Pfam" id="PF01336">
    <property type="entry name" value="tRNA_anti-codon"/>
    <property type="match status" value="1"/>
</dbReference>
<dbReference type="PRINTS" id="PR01042">
    <property type="entry name" value="TRNASYNTHASP"/>
</dbReference>
<dbReference type="SUPFAM" id="SSF55681">
    <property type="entry name" value="Class II aaRS and biotin synthetases"/>
    <property type="match status" value="1"/>
</dbReference>
<dbReference type="SUPFAM" id="SSF55261">
    <property type="entry name" value="GAD domain-like"/>
    <property type="match status" value="1"/>
</dbReference>
<dbReference type="SUPFAM" id="SSF50249">
    <property type="entry name" value="Nucleic acid-binding proteins"/>
    <property type="match status" value="1"/>
</dbReference>
<dbReference type="PROSITE" id="PS50862">
    <property type="entry name" value="AA_TRNA_LIGASE_II"/>
    <property type="match status" value="1"/>
</dbReference>
<protein>
    <recommendedName>
        <fullName evidence="1">Aspartate--tRNA(Asp/Asn) ligase</fullName>
        <ecNumber evidence="1">6.1.1.23</ecNumber>
    </recommendedName>
    <alternativeName>
        <fullName evidence="1">Aspartyl-tRNA synthetase</fullName>
        <shortName evidence="1">AspRS</shortName>
    </alternativeName>
    <alternativeName>
        <fullName evidence="1">Non-discriminating aspartyl-tRNA synthetase</fullName>
        <shortName evidence="1">ND-AspRS</shortName>
    </alternativeName>
</protein>
<reference key="1">
    <citation type="journal article" date="2003" name="Proc. Natl. Acad. Sci. U.S.A.">
        <title>Complete genome sequence and analysis of Wolinella succinogenes.</title>
        <authorList>
            <person name="Baar C."/>
            <person name="Eppinger M."/>
            <person name="Raddatz G."/>
            <person name="Simon J."/>
            <person name="Lanz C."/>
            <person name="Klimmek O."/>
            <person name="Nandakumar R."/>
            <person name="Gross R."/>
            <person name="Rosinus A."/>
            <person name="Keller H."/>
            <person name="Jagtap P."/>
            <person name="Linke B."/>
            <person name="Meyer F."/>
            <person name="Lederer H."/>
            <person name="Schuster S.C."/>
        </authorList>
    </citation>
    <scope>NUCLEOTIDE SEQUENCE [LARGE SCALE GENOMIC DNA]</scope>
    <source>
        <strain>ATCC 29543 / DSM 1740 / CCUG 13145 / JCM 31913 / LMG 7466 / NCTC 11488 / FDC 602W</strain>
    </source>
</reference>
<name>SYDND_WOLSU</name>
<keyword id="KW-0030">Aminoacyl-tRNA synthetase</keyword>
<keyword id="KW-0067">ATP-binding</keyword>
<keyword id="KW-0963">Cytoplasm</keyword>
<keyword id="KW-0436">Ligase</keyword>
<keyword id="KW-0547">Nucleotide-binding</keyword>
<keyword id="KW-0648">Protein biosynthesis</keyword>
<keyword id="KW-1185">Reference proteome</keyword>
<sequence length="587" mass="66057">MYVLRTHLCTQLGEGNIGEEVILCGWCNTYRDHGGVIFIDLRDKSGIIQLVSDPDDSPKAHENARVVRDEFVLIAKGKVRARGTGLENPKLATGKIEVILEELIIENRSLTPPITIGDESVGEDLRLKYRFLDLRNPKAYDTFRLRSKAAIAARNSLDGMGFLEVETPILTKATPEGARDYLVPSRVHPGEFFALPQSPQLFKQLLMISGFDRYFQIAKCFRDEDLRADRQPEFTQIDVEMSFCDQEDVMGVAEKLLGDIFSACGHTIPEHFPHLTYDRAMEEYGSDKPDLRFEMPLVEVIDLFGDSNNEIFAKIAQDSKKNRFKALKVKGGDLFFTRKTLGVLEEFVKKFGAAGLAYIQVKEEGLKGPLVKFMSERSLSLLLERLNPEVGDIIFFGAGEKKSVWDYMGRLRLEVAKQMGLIDPNQLCFLWVVNFPMFEKDEGKVKALHHPFTMPKNLDCEDVEEISSIAYDVVLNGVELGGGSIRIHQEAIQKRVFDLLGIAPEEAQEKFDFLLEALKFGAPPHGGFAIGFDRLIMLLTQSPSIRDVIAFPKTQKATCPLTSAPSPVSSEQLKELHIRIKEKTQTH</sequence>
<organism>
    <name type="scientific">Wolinella succinogenes (strain ATCC 29543 / DSM 1740 / CCUG 13145 / JCM 31913 / LMG 7466 / NCTC 11488 / FDC 602W)</name>
    <name type="common">Vibrio succinogenes</name>
    <dbReference type="NCBI Taxonomy" id="273121"/>
    <lineage>
        <taxon>Bacteria</taxon>
        <taxon>Pseudomonadati</taxon>
        <taxon>Campylobacterota</taxon>
        <taxon>Epsilonproteobacteria</taxon>
        <taxon>Campylobacterales</taxon>
        <taxon>Helicobacteraceae</taxon>
        <taxon>Wolinella</taxon>
    </lineage>
</organism>
<accession>Q7M8A6</accession>
<feature type="chain" id="PRO_0000110981" description="Aspartate--tRNA(Asp/Asn) ligase">
    <location>
        <begin position="1"/>
        <end position="587"/>
    </location>
</feature>
<feature type="region of interest" description="Aspartate" evidence="1">
    <location>
        <begin position="200"/>
        <end position="203"/>
    </location>
</feature>
<feature type="binding site" evidence="1">
    <location>
        <position position="176"/>
    </location>
    <ligand>
        <name>L-aspartate</name>
        <dbReference type="ChEBI" id="CHEBI:29991"/>
    </ligand>
</feature>
<feature type="binding site" evidence="1">
    <location>
        <begin position="222"/>
        <end position="224"/>
    </location>
    <ligand>
        <name>ATP</name>
        <dbReference type="ChEBI" id="CHEBI:30616"/>
    </ligand>
</feature>
<feature type="binding site" evidence="1">
    <location>
        <position position="222"/>
    </location>
    <ligand>
        <name>L-aspartate</name>
        <dbReference type="ChEBI" id="CHEBI:29991"/>
    </ligand>
</feature>
<feature type="binding site" evidence="1">
    <location>
        <position position="231"/>
    </location>
    <ligand>
        <name>ATP</name>
        <dbReference type="ChEBI" id="CHEBI:30616"/>
    </ligand>
</feature>
<feature type="binding site" evidence="1">
    <location>
        <position position="449"/>
    </location>
    <ligand>
        <name>L-aspartate</name>
        <dbReference type="ChEBI" id="CHEBI:29991"/>
    </ligand>
</feature>
<feature type="binding site" evidence="1">
    <location>
        <position position="479"/>
    </location>
    <ligand>
        <name>ATP</name>
        <dbReference type="ChEBI" id="CHEBI:30616"/>
    </ligand>
</feature>
<feature type="binding site" evidence="1">
    <location>
        <position position="486"/>
    </location>
    <ligand>
        <name>L-aspartate</name>
        <dbReference type="ChEBI" id="CHEBI:29991"/>
    </ligand>
</feature>
<feature type="binding site" evidence="1">
    <location>
        <begin position="531"/>
        <end position="534"/>
    </location>
    <ligand>
        <name>ATP</name>
        <dbReference type="ChEBI" id="CHEBI:30616"/>
    </ligand>
</feature>
<feature type="site" description="Important for tRNA non-discrimination" evidence="1">
    <location>
        <position position="33"/>
    </location>
</feature>
<feature type="site" description="Important for tRNA non-discrimination" evidence="1">
    <location>
        <position position="85"/>
    </location>
</feature>